<feature type="chain" id="PRO_0000173390" description="Tetracycline resistance protein">
    <location>
        <begin position="1"/>
        <end position="458"/>
    </location>
</feature>
<feature type="transmembrane region" description="Helical" evidence="1">
    <location>
        <begin position="12"/>
        <end position="33"/>
    </location>
</feature>
<feature type="transmembrane region" description="Helical" evidence="1">
    <location>
        <begin position="81"/>
        <end position="100"/>
    </location>
</feature>
<feature type="transmembrane region" description="Helical" evidence="1">
    <location>
        <begin position="111"/>
        <end position="129"/>
    </location>
</feature>
<feature type="transmembrane region" description="Helical" evidence="1">
    <location>
        <begin position="140"/>
        <end position="162"/>
    </location>
</feature>
<feature type="transmembrane region" description="Helical" evidence="1">
    <location>
        <begin position="165"/>
        <end position="185"/>
    </location>
</feature>
<feature type="transmembrane region" description="Helical" evidence="1">
    <location>
        <begin position="201"/>
        <end position="221"/>
    </location>
</feature>
<feature type="transmembrane region" description="Helical" evidence="1">
    <location>
        <begin position="223"/>
        <end position="240"/>
    </location>
</feature>
<feature type="transmembrane region" description="Helical" evidence="1">
    <location>
        <begin position="256"/>
        <end position="276"/>
    </location>
</feature>
<feature type="transmembrane region" description="Helical" evidence="1">
    <location>
        <begin position="297"/>
        <end position="317"/>
    </location>
</feature>
<feature type="transmembrane region" description="Helical" evidence="1">
    <location>
        <begin position="324"/>
        <end position="344"/>
    </location>
</feature>
<feature type="transmembrane region" description="Helical" evidence="1">
    <location>
        <begin position="346"/>
        <end position="365"/>
    </location>
</feature>
<feature type="transmembrane region" description="Helical" evidence="1">
    <location>
        <begin position="432"/>
        <end position="451"/>
    </location>
</feature>
<organism>
    <name type="scientific">Bacillus cereus</name>
    <dbReference type="NCBI Taxonomy" id="1396"/>
    <lineage>
        <taxon>Bacteria</taxon>
        <taxon>Bacillati</taxon>
        <taxon>Bacillota</taxon>
        <taxon>Bacilli</taxon>
        <taxon>Bacillales</taxon>
        <taxon>Bacillaceae</taxon>
        <taxon>Bacillus</taxon>
        <taxon>Bacillus cereus group</taxon>
    </lineage>
</organism>
<evidence type="ECO:0000255" key="1"/>
<evidence type="ECO:0000305" key="2"/>
<dbReference type="EMBL" id="X51366">
    <property type="protein sequence ID" value="CAA35751.1"/>
    <property type="molecule type" value="Genomic_DNA"/>
</dbReference>
<dbReference type="PIR" id="S09234">
    <property type="entry name" value="YTBSU6"/>
</dbReference>
<dbReference type="RefSeq" id="NP_043524.1">
    <property type="nucleotide sequence ID" value="NC_001705.1"/>
</dbReference>
<dbReference type="SMR" id="P0A4K7"/>
<dbReference type="GO" id="GO:0005886">
    <property type="term" value="C:plasma membrane"/>
    <property type="evidence" value="ECO:0007669"/>
    <property type="project" value="UniProtKB-SubCell"/>
</dbReference>
<dbReference type="GO" id="GO:0015297">
    <property type="term" value="F:antiporter activity"/>
    <property type="evidence" value="ECO:0007669"/>
    <property type="project" value="UniProtKB-KW"/>
</dbReference>
<dbReference type="GO" id="GO:1902600">
    <property type="term" value="P:proton transmembrane transport"/>
    <property type="evidence" value="ECO:0007669"/>
    <property type="project" value="UniProtKB-KW"/>
</dbReference>
<dbReference type="GO" id="GO:0046677">
    <property type="term" value="P:response to antibiotic"/>
    <property type="evidence" value="ECO:0007669"/>
    <property type="project" value="UniProtKB-KW"/>
</dbReference>
<dbReference type="CDD" id="cd17321">
    <property type="entry name" value="MFS_MMR_MDR_like"/>
    <property type="match status" value="1"/>
</dbReference>
<dbReference type="Gene3D" id="1.20.1250.20">
    <property type="entry name" value="MFS general substrate transporter like domains"/>
    <property type="match status" value="1"/>
</dbReference>
<dbReference type="Gene3D" id="1.20.1720.10">
    <property type="entry name" value="Multidrug resistance protein D"/>
    <property type="match status" value="1"/>
</dbReference>
<dbReference type="InterPro" id="IPR011701">
    <property type="entry name" value="MFS"/>
</dbReference>
<dbReference type="InterPro" id="IPR020846">
    <property type="entry name" value="MFS_dom"/>
</dbReference>
<dbReference type="InterPro" id="IPR036259">
    <property type="entry name" value="MFS_trans_sf"/>
</dbReference>
<dbReference type="NCBIfam" id="NF012185">
    <property type="entry name" value="tet_MFS_L"/>
    <property type="match status" value="1"/>
</dbReference>
<dbReference type="NCBIfam" id="NF012175">
    <property type="entry name" value="tet_MFS_L_K_45"/>
    <property type="match status" value="1"/>
</dbReference>
<dbReference type="PANTHER" id="PTHR23501">
    <property type="entry name" value="MAJOR FACILITATOR SUPERFAMILY"/>
    <property type="match status" value="1"/>
</dbReference>
<dbReference type="PANTHER" id="PTHR23501:SF188">
    <property type="entry name" value="TETRACYCLINE RESISTANCE PROTEIN"/>
    <property type="match status" value="1"/>
</dbReference>
<dbReference type="Pfam" id="PF07690">
    <property type="entry name" value="MFS_1"/>
    <property type="match status" value="1"/>
</dbReference>
<dbReference type="PRINTS" id="PR01036">
    <property type="entry name" value="TCRTETB"/>
</dbReference>
<dbReference type="SUPFAM" id="SSF103473">
    <property type="entry name" value="MFS general substrate transporter"/>
    <property type="match status" value="1"/>
</dbReference>
<dbReference type="PROSITE" id="PS50850">
    <property type="entry name" value="MFS"/>
    <property type="match status" value="1"/>
</dbReference>
<gene>
    <name type="primary">tet</name>
</gene>
<sequence>MNTSYSQSNLRHNQILIWLCILSFFSVLNEMVLNVSLPDIANDFNKPPASTNWVNTAFMLTFSIGTAVYGKLSDQLGIKRLLLFGIIINCFGSVIGFVGHSFFSLLIMARFIQGAGAAAFPALVMVVVARYIPKENRGKAFGLIGSIVAMGEGVGPAIGGMIAHYIHWSYLLLIPMITIITVPFLMKLLKKEVRIKGHFDIKGIILMSVGIVFFMLFTTSYSISFLIVSVLSFLIFVKHIRKVTDPFVDPGLGKNIPFMIGVLCGGIIFGTVAGFVSMVPYMMKDVHQLSTAEIGSVIIFPGTMSVIIFGYIGGILVDRRGPLYVLNIGVTFLSVSFLTASFLLETTSWFMTIIIVFVLGGLSFTKTVISTIVSSSLKQQEAGAGMSLLNFTSFLSEGTGIAIVGGLLSIPLLDQRLLPMEVDQSTYLYSNLLLLFSGIIVISWLVTLNVYKHSQRDF</sequence>
<protein>
    <recommendedName>
        <fullName>Tetracycline resistance protein</fullName>
    </recommendedName>
</protein>
<accession>P0A4K7</accession>
<accession>P11063</accession>
<accession>P72219</accession>
<name>TCR_BACCE</name>
<reference key="1">
    <citation type="journal article" date="1990" name="Nucleic Acids Res.">
        <title>Nucleotide sequence of the tetracycline resistance gene of pBC16 from Bacillus cereus.</title>
        <authorList>
            <person name="Palva A."/>
            <person name="Vidgren G."/>
            <person name="Simonen M."/>
            <person name="Rintala H."/>
            <person name="Laamanen P."/>
        </authorList>
    </citation>
    <scope>NUCLEOTIDE SEQUENCE [GENOMIC DNA]</scope>
</reference>
<keyword id="KW-0046">Antibiotic resistance</keyword>
<keyword id="KW-0050">Antiport</keyword>
<keyword id="KW-1003">Cell membrane</keyword>
<keyword id="KW-0375">Hydrogen ion transport</keyword>
<keyword id="KW-0406">Ion transport</keyword>
<keyword id="KW-0472">Membrane</keyword>
<keyword id="KW-0614">Plasmid</keyword>
<keyword id="KW-0812">Transmembrane</keyword>
<keyword id="KW-1133">Transmembrane helix</keyword>
<keyword id="KW-0813">Transport</keyword>
<geneLocation type="plasmid">
    <name>pBC16</name>
</geneLocation>
<comment type="function">
    <text>Resistance to tetracycline by an active tetracycline efflux. This is an energy-dependent process that decreases the accumulation of the antibiotic in whole cells. This protein functions as a metal-tetracycline/H(+) antiporter.</text>
</comment>
<comment type="subcellular location">
    <subcellularLocation>
        <location>Cell membrane</location>
        <topology>Multi-pass membrane protein</topology>
    </subcellularLocation>
</comment>
<comment type="similarity">
    <text evidence="2">Belongs to the major facilitator superfamily. TCR/Tet family.</text>
</comment>
<proteinExistence type="inferred from homology"/>